<organism>
    <name type="scientific">Candida albicans (strain SC5314 / ATCC MYA-2876)</name>
    <name type="common">Yeast</name>
    <dbReference type="NCBI Taxonomy" id="237561"/>
    <lineage>
        <taxon>Eukaryota</taxon>
        <taxon>Fungi</taxon>
        <taxon>Dikarya</taxon>
        <taxon>Ascomycota</taxon>
        <taxon>Saccharomycotina</taxon>
        <taxon>Pichiomycetes</taxon>
        <taxon>Debaryomycetaceae</taxon>
        <taxon>Candida/Lodderomyces clade</taxon>
        <taxon>Candida</taxon>
    </lineage>
</organism>
<proteinExistence type="evidence at transcript level"/>
<feature type="chain" id="PRO_0000459479" description="NAD(P)H quinone oxidoreductase YCP4">
    <location>
        <begin position="1"/>
        <end position="288"/>
    </location>
</feature>
<feature type="domain" description="Flavodoxin-like" evidence="1">
    <location>
        <begin position="3"/>
        <end position="192"/>
    </location>
</feature>
<feature type="region of interest" description="Disordered" evidence="2">
    <location>
        <begin position="202"/>
        <end position="288"/>
    </location>
</feature>
<feature type="compositionally biased region" description="Low complexity" evidence="2">
    <location>
        <begin position="205"/>
        <end position="254"/>
    </location>
</feature>
<feature type="compositionally biased region" description="Polar residues" evidence="2">
    <location>
        <begin position="261"/>
        <end position="288"/>
    </location>
</feature>
<feature type="binding site" evidence="1">
    <location>
        <begin position="9"/>
        <end position="13"/>
    </location>
    <ligand>
        <name>FMN</name>
        <dbReference type="ChEBI" id="CHEBI:58210"/>
    </ligand>
</feature>
<feature type="binding site" evidence="1">
    <location>
        <begin position="110"/>
        <end position="164"/>
    </location>
    <ligand>
        <name>FMN</name>
        <dbReference type="ChEBI" id="CHEBI:58210"/>
    </ligand>
</feature>
<sequence>MKIAIIQYSTYGHITQLAKAVQKGVADAGYKADIFQVPETLPQEVLDKMHAPAKPTDIPIATNDTLTEYDAFLFGVPTRYGTAPAQFFEFWGATGGLWANGSLAGKPAGVFVSTSGQGGGQETTVRNFLNFLAHHGMPYIPLGYANAFALQSSMEEVHGGSPYGAGTFANVDGSRQPSTLELEIAEKQGEAFVKSATKLVKGSKKTNTTTTSKSAATSDAAGTTSGTAAGTSAATGAATGTSAPKESTKEASSSAKKEATNGTATRTQQSTKAPETAEKSSCSKCIIM</sequence>
<name>YCP4_CANAL</name>
<keyword id="KW-1003">Cell membrane</keyword>
<keyword id="KW-0285">Flavoprotein</keyword>
<keyword id="KW-0288">FMN</keyword>
<keyword id="KW-0472">Membrane</keyword>
<keyword id="KW-0520">NAD</keyword>
<keyword id="KW-0547">Nucleotide-binding</keyword>
<keyword id="KW-0560">Oxidoreductase</keyword>
<keyword id="KW-1185">Reference proteome</keyword>
<keyword id="KW-0843">Virulence</keyword>
<evidence type="ECO:0000255" key="1">
    <source>
        <dbReference type="PROSITE-ProRule" id="PRU00088"/>
    </source>
</evidence>
<evidence type="ECO:0000256" key="2">
    <source>
        <dbReference type="SAM" id="MobiDB-lite"/>
    </source>
</evidence>
<evidence type="ECO:0000269" key="3">
    <source>
    </source>
</evidence>
<evidence type="ECO:0000269" key="4">
    <source>
    </source>
</evidence>
<evidence type="ECO:0000269" key="5">
    <source>
    </source>
</evidence>
<evidence type="ECO:0000269" key="6">
    <source>
    </source>
</evidence>
<evidence type="ECO:0000303" key="7">
    <source>
    </source>
</evidence>
<evidence type="ECO:0000303" key="8">
    <source>
    </source>
</evidence>
<evidence type="ECO:0000305" key="9"/>
<evidence type="ECO:0000305" key="10">
    <source>
    </source>
</evidence>
<accession>A0A1D8PT03</accession>
<reference key="1">
    <citation type="journal article" date="2004" name="Proc. Natl. Acad. Sci. U.S.A.">
        <title>The diploid genome sequence of Candida albicans.</title>
        <authorList>
            <person name="Jones T."/>
            <person name="Federspiel N.A."/>
            <person name="Chibana H."/>
            <person name="Dungan J."/>
            <person name="Kalman S."/>
            <person name="Magee B.B."/>
            <person name="Newport G."/>
            <person name="Thorstenson Y.R."/>
            <person name="Agabian N."/>
            <person name="Magee P.T."/>
            <person name="Davis R.W."/>
            <person name="Scherer S."/>
        </authorList>
    </citation>
    <scope>NUCLEOTIDE SEQUENCE [LARGE SCALE GENOMIC DNA]</scope>
    <source>
        <strain>SC5314 / ATCC MYA-2876</strain>
    </source>
</reference>
<reference key="2">
    <citation type="journal article" date="2007" name="Genome Biol.">
        <title>Assembly of the Candida albicans genome into sixteen supercontigs aligned on the eight chromosomes.</title>
        <authorList>
            <person name="van het Hoog M."/>
            <person name="Rast T.J."/>
            <person name="Martchenko M."/>
            <person name="Grindle S."/>
            <person name="Dignard D."/>
            <person name="Hogues H."/>
            <person name="Cuomo C."/>
            <person name="Berriman M."/>
            <person name="Scherer S."/>
            <person name="Magee B.B."/>
            <person name="Whiteway M."/>
            <person name="Chibana H."/>
            <person name="Nantel A."/>
            <person name="Magee P.T."/>
        </authorList>
    </citation>
    <scope>GENOME REANNOTATION</scope>
    <source>
        <strain>SC5314 / ATCC MYA-2876</strain>
    </source>
</reference>
<reference key="3">
    <citation type="journal article" date="2013" name="Genome Biol.">
        <title>Assembly of a phased diploid Candida albicans genome facilitates allele-specific measurements and provides a simple model for repeat and indel structure.</title>
        <authorList>
            <person name="Muzzey D."/>
            <person name="Schwartz K."/>
            <person name="Weissman J.S."/>
            <person name="Sherlock G."/>
        </authorList>
    </citation>
    <scope>NUCLEOTIDE SEQUENCE [LARGE SCALE GENOMIC DNA]</scope>
    <scope>GENOME REANNOTATION</scope>
    <source>
        <strain>SC5314 / ATCC MYA-2876</strain>
    </source>
</reference>
<reference key="4">
    <citation type="journal article" date="2011" name="Mol. Microbiol.">
        <title>Contribution of the glycolytic flux and hypoxia adaptation to efficient biofilm formation by Candida albicans.</title>
        <authorList>
            <person name="Bonhomme J."/>
            <person name="Chauvel M."/>
            <person name="Goyard S."/>
            <person name="Roux P."/>
            <person name="Rossignol T."/>
            <person name="d'Enfert C."/>
        </authorList>
    </citation>
    <scope>INDUCTION</scope>
</reference>
<reference key="5">
    <citation type="journal article" date="2012" name="Cell">
        <title>A recently evolved transcriptional network controls biofilm development in Candida albicans.</title>
        <authorList>
            <person name="Nobile C.J."/>
            <person name="Fox E.P."/>
            <person name="Nett J.E."/>
            <person name="Sorrells T.R."/>
            <person name="Mitrovich Q.M."/>
            <person name="Hernday A.D."/>
            <person name="Tuch B.B."/>
            <person name="Andes D.R."/>
            <person name="Johnson A.D."/>
        </authorList>
    </citation>
    <scope>INDUCTION</scope>
</reference>
<reference key="6">
    <citation type="journal article" date="2015" name="J. Proteomics">
        <title>Candida albicans cell shaving uncovers new proteins involved in cell wall integrity, yeast to hypha transition, stress response and host-pathogen interaction.</title>
        <authorList>
            <person name="Gil-Bona A."/>
            <person name="Parra-Giraldo C.M."/>
            <person name="Hernaez M.L."/>
            <person name="Reales-Calderon J.A."/>
            <person name="Solis N.V."/>
            <person name="Filler S.G."/>
            <person name="Monteoliva L."/>
            <person name="Gil C."/>
        </authorList>
    </citation>
    <scope>FUNCTION</scope>
    <scope>DISRUPTION PHENOTYPE</scope>
</reference>
<reference key="7">
    <citation type="journal article" date="2015" name="PLoS Pathog.">
        <title>Flavodoxin-Like Proteins Protect Candida albicans from Oxidative Stress and Promote Virulence.</title>
        <authorList>
            <person name="Li L."/>
            <person name="Naseem S."/>
            <person name="Sharma S."/>
            <person name="Konopka J.B."/>
        </authorList>
    </citation>
    <scope>FUNCTION</scope>
    <scope>DISRUPTION PHENOTYPE</scope>
    <scope>SUBCELLULAR LOCATION</scope>
</reference>
<protein>
    <recommendedName>
        <fullName evidence="8">NAD(P)H quinone oxidoreductase YCP4</fullName>
        <ecNumber evidence="10">1.6.5.2</ecNumber>
    </recommendedName>
    <alternativeName>
        <fullName evidence="8">Flavodoxin-like protein YCP4</fullName>
        <shortName evidence="8">FLP YCP4</shortName>
    </alternativeName>
</protein>
<dbReference type="EC" id="1.6.5.2" evidence="10"/>
<dbReference type="EMBL" id="CP017630">
    <property type="protein sequence ID" value="AOW31260.1"/>
    <property type="molecule type" value="Genomic_DNA"/>
</dbReference>
<dbReference type="RefSeq" id="XP_710367.1">
    <property type="nucleotide sequence ID" value="XM_705275.2"/>
</dbReference>
<dbReference type="SMR" id="A0A1D8PT03"/>
<dbReference type="FunCoup" id="A0A1D8PT03">
    <property type="interactions" value="224"/>
</dbReference>
<dbReference type="STRING" id="237561.A0A1D8PT03"/>
<dbReference type="EnsemblFungi" id="CR_05380C_A-T">
    <property type="protein sequence ID" value="CR_05380C_A-T-p1"/>
    <property type="gene ID" value="CR_05380C_A"/>
</dbReference>
<dbReference type="GeneID" id="3648032"/>
<dbReference type="KEGG" id="cal:CAALFM_CR05380CA"/>
<dbReference type="CGD" id="CAL0000193139">
    <property type="gene designation" value="YCP4"/>
</dbReference>
<dbReference type="VEuPathDB" id="FungiDB:CR_05380C_A"/>
<dbReference type="eggNOG" id="KOG3135">
    <property type="taxonomic scope" value="Eukaryota"/>
</dbReference>
<dbReference type="InParanoid" id="A0A1D8PT03"/>
<dbReference type="OMA" id="HGMPYIP"/>
<dbReference type="OrthoDB" id="504689at2759"/>
<dbReference type="Proteomes" id="UP000000559">
    <property type="component" value="Chromosome R"/>
</dbReference>
<dbReference type="GO" id="GO:0005737">
    <property type="term" value="C:cytoplasm"/>
    <property type="evidence" value="ECO:0007669"/>
    <property type="project" value="EnsemblFungi"/>
</dbReference>
<dbReference type="GO" id="GO:0032126">
    <property type="term" value="C:eisosome"/>
    <property type="evidence" value="ECO:0007669"/>
    <property type="project" value="EnsemblFungi"/>
</dbReference>
<dbReference type="GO" id="GO:0062040">
    <property type="term" value="C:fungal biofilm matrix"/>
    <property type="evidence" value="ECO:0000314"/>
    <property type="project" value="CGD"/>
</dbReference>
<dbReference type="GO" id="GO:0016020">
    <property type="term" value="C:membrane"/>
    <property type="evidence" value="ECO:0000318"/>
    <property type="project" value="GO_Central"/>
</dbReference>
<dbReference type="GO" id="GO:0005886">
    <property type="term" value="C:plasma membrane"/>
    <property type="evidence" value="ECO:0000314"/>
    <property type="project" value="CGD"/>
</dbReference>
<dbReference type="GO" id="GO:0010181">
    <property type="term" value="F:FMN binding"/>
    <property type="evidence" value="ECO:0007669"/>
    <property type="project" value="InterPro"/>
</dbReference>
<dbReference type="GO" id="GO:0003955">
    <property type="term" value="F:NAD(P)H dehydrogenase (quinone) activity"/>
    <property type="evidence" value="ECO:0000318"/>
    <property type="project" value="GO_Central"/>
</dbReference>
<dbReference type="GO" id="GO:0034599">
    <property type="term" value="P:cellular response to oxidative stress"/>
    <property type="evidence" value="ECO:0000316"/>
    <property type="project" value="CGD"/>
</dbReference>
<dbReference type="GO" id="GO:0160020">
    <property type="term" value="P:positive regulation of ferroptosis"/>
    <property type="evidence" value="ECO:0007669"/>
    <property type="project" value="EnsemblFungi"/>
</dbReference>
<dbReference type="FunFam" id="3.40.50.360:FF:000001">
    <property type="entry name" value="NAD(P)H dehydrogenase (Quinone) FQR1-like"/>
    <property type="match status" value="1"/>
</dbReference>
<dbReference type="Gene3D" id="3.40.50.360">
    <property type="match status" value="1"/>
</dbReference>
<dbReference type="InterPro" id="IPR008254">
    <property type="entry name" value="Flavodoxin/NO_synth"/>
</dbReference>
<dbReference type="InterPro" id="IPR029039">
    <property type="entry name" value="Flavoprotein-like_sf"/>
</dbReference>
<dbReference type="InterPro" id="IPR010089">
    <property type="entry name" value="Flavoprotein_WrbA-like"/>
</dbReference>
<dbReference type="InterPro" id="IPR005025">
    <property type="entry name" value="FMN_Rdtase-like_dom"/>
</dbReference>
<dbReference type="NCBIfam" id="TIGR01755">
    <property type="entry name" value="flav_wrbA"/>
    <property type="match status" value="1"/>
</dbReference>
<dbReference type="NCBIfam" id="NF002999">
    <property type="entry name" value="PRK03767.1"/>
    <property type="match status" value="1"/>
</dbReference>
<dbReference type="PANTHER" id="PTHR30546">
    <property type="entry name" value="FLAVODOXIN-RELATED PROTEIN WRBA-RELATED"/>
    <property type="match status" value="1"/>
</dbReference>
<dbReference type="PANTHER" id="PTHR30546:SF23">
    <property type="entry name" value="FLAVOPROTEIN-LIKE PROTEIN YCP4-RELATED"/>
    <property type="match status" value="1"/>
</dbReference>
<dbReference type="Pfam" id="PF03358">
    <property type="entry name" value="FMN_red"/>
    <property type="match status" value="1"/>
</dbReference>
<dbReference type="SUPFAM" id="SSF52218">
    <property type="entry name" value="Flavoproteins"/>
    <property type="match status" value="1"/>
</dbReference>
<dbReference type="PROSITE" id="PS50902">
    <property type="entry name" value="FLAVODOXIN_LIKE"/>
    <property type="match status" value="1"/>
</dbReference>
<gene>
    <name evidence="7" type="primary">YCP4</name>
    <name type="ordered locus">CAALFM_CR05380CA</name>
    <name type="ordered locus">orf19.5286</name>
</gene>
<comment type="function">
    <text evidence="5 6">Flavodoxin-like protein (FLP) that plays a role in cell wall integrity, oxidative stress protection and virulence (PubMed:26087349, PubMed:26325183). FLPs act as NAD(P)H quinone oxidoreductases (PubMed:26325183). Reduces ubiquinone (coenzyme Q), enabling it to serve as an antioxidant in the membrane (PubMed:26325183).</text>
</comment>
<comment type="catalytic activity">
    <reaction evidence="10">
        <text>a quinone + NADH + H(+) = a quinol + NAD(+)</text>
        <dbReference type="Rhea" id="RHEA:46160"/>
        <dbReference type="ChEBI" id="CHEBI:15378"/>
        <dbReference type="ChEBI" id="CHEBI:24646"/>
        <dbReference type="ChEBI" id="CHEBI:57540"/>
        <dbReference type="ChEBI" id="CHEBI:57945"/>
        <dbReference type="ChEBI" id="CHEBI:132124"/>
        <dbReference type="EC" id="1.6.5.2"/>
    </reaction>
</comment>
<comment type="catalytic activity">
    <reaction evidence="10">
        <text>a quinone + NADPH + H(+) = a quinol + NADP(+)</text>
        <dbReference type="Rhea" id="RHEA:46164"/>
        <dbReference type="ChEBI" id="CHEBI:15378"/>
        <dbReference type="ChEBI" id="CHEBI:24646"/>
        <dbReference type="ChEBI" id="CHEBI:57783"/>
        <dbReference type="ChEBI" id="CHEBI:58349"/>
        <dbReference type="ChEBI" id="CHEBI:132124"/>
        <dbReference type="EC" id="1.6.5.2"/>
    </reaction>
</comment>
<comment type="cofactor">
    <cofactor evidence="1">
        <name>FMN</name>
        <dbReference type="ChEBI" id="CHEBI:58210"/>
    </cofactor>
</comment>
<comment type="subcellular location">
    <subcellularLocation>
        <location evidence="6">Cell membrane</location>
        <topology evidence="6">Peripheral membrane protein</topology>
    </subcellularLocation>
</comment>
<comment type="induction">
    <text evidence="3 4">Expression is down-regulated during biofilm formation.</text>
</comment>
<comment type="disruption phenotype">
    <text evidence="5 6">Increases the sensitivity to the oxidative stress agent H(2)O(2) (PubMed:26087349). Quadruple mutant lacking all four FLPs (PST1, PST2, PST3 and YCP4) is more sensitive to benzoquinone and linolenic acid, a polyunsaturated fatty acid that can auto-oxidize and promote lipid peroxidation (PubMed:26325183). The quadruple mutant is also avirulent in a mouse model of systemic candidiasis (PubMed:26325183).</text>
</comment>
<comment type="similarity">
    <text evidence="9">Belongs to the WrbA family.</text>
</comment>